<reference key="1">
    <citation type="journal article" date="1996" name="Nucleic Acids Res.">
        <title>Sequence analysis of 56 kb from the genome of the bacterium Mycoplasma pneumoniae comprising the dnaA region, the atp operon and a cluster of ribosomal protein genes.</title>
        <authorList>
            <person name="Hilbert H."/>
            <person name="Himmelreich R."/>
            <person name="Plagens H."/>
            <person name="Herrmann R."/>
        </authorList>
    </citation>
    <scope>NUCLEOTIDE SEQUENCE [GENOMIC DNA]</scope>
    <source>
        <strain>ATCC 29342 / M129 / Subtype 1</strain>
    </source>
</reference>
<reference key="2">
    <citation type="journal article" date="1996" name="Nucleic Acids Res.">
        <title>Complete sequence analysis of the genome of the bacterium Mycoplasma pneumoniae.</title>
        <authorList>
            <person name="Himmelreich R."/>
            <person name="Hilbert H."/>
            <person name="Plagens H."/>
            <person name="Pirkl E."/>
            <person name="Li B.-C."/>
            <person name="Herrmann R."/>
        </authorList>
    </citation>
    <scope>NUCLEOTIDE SEQUENCE [LARGE SCALE GENOMIC DNA]</scope>
    <source>
        <strain>ATCC 29342 / M129 / Subtype 1</strain>
    </source>
</reference>
<accession>Q50293</accession>
<dbReference type="EC" id="7.-.-.-" evidence="1"/>
<dbReference type="EMBL" id="U34795">
    <property type="protein sequence ID" value="AAC43687.1"/>
    <property type="molecule type" value="Genomic_DNA"/>
</dbReference>
<dbReference type="EMBL" id="U00089">
    <property type="protein sequence ID" value="AAB96285.1"/>
    <property type="molecule type" value="Genomic_DNA"/>
</dbReference>
<dbReference type="PIR" id="S62814">
    <property type="entry name" value="S62814"/>
</dbReference>
<dbReference type="RefSeq" id="NP_109882.1">
    <property type="nucleotide sequence ID" value="NC_000912.1"/>
</dbReference>
<dbReference type="RefSeq" id="WP_010874551.1">
    <property type="nucleotide sequence ID" value="NZ_OU342337.1"/>
</dbReference>
<dbReference type="SMR" id="Q50293"/>
<dbReference type="IntAct" id="Q50293">
    <property type="interactions" value="1"/>
</dbReference>
<dbReference type="STRING" id="272634.MPN_194"/>
<dbReference type="EnsemblBacteria" id="AAB96285">
    <property type="protein sequence ID" value="AAB96285"/>
    <property type="gene ID" value="MPN_194"/>
</dbReference>
<dbReference type="KEGG" id="mpn:MPN_194"/>
<dbReference type="PATRIC" id="fig|272634.6.peg.212"/>
<dbReference type="HOGENOM" id="CLU_000604_1_22_14"/>
<dbReference type="OrthoDB" id="9784332at2"/>
<dbReference type="BioCyc" id="MPNE272634:G1GJ3-310-MONOMER"/>
<dbReference type="Proteomes" id="UP000000808">
    <property type="component" value="Chromosome"/>
</dbReference>
<dbReference type="GO" id="GO:0043190">
    <property type="term" value="C:ATP-binding cassette (ABC) transporter complex"/>
    <property type="evidence" value="ECO:0007669"/>
    <property type="project" value="TreeGrafter"/>
</dbReference>
<dbReference type="GO" id="GO:0005524">
    <property type="term" value="F:ATP binding"/>
    <property type="evidence" value="ECO:0007669"/>
    <property type="project" value="UniProtKB-KW"/>
</dbReference>
<dbReference type="GO" id="GO:0016887">
    <property type="term" value="F:ATP hydrolysis activity"/>
    <property type="evidence" value="ECO:0007669"/>
    <property type="project" value="InterPro"/>
</dbReference>
<dbReference type="GO" id="GO:0042626">
    <property type="term" value="F:ATPase-coupled transmembrane transporter activity"/>
    <property type="evidence" value="ECO:0007669"/>
    <property type="project" value="TreeGrafter"/>
</dbReference>
<dbReference type="CDD" id="cd03225">
    <property type="entry name" value="ABC_cobalt_CbiO_domain1"/>
    <property type="match status" value="1"/>
</dbReference>
<dbReference type="FunFam" id="3.40.50.300:FF:000224">
    <property type="entry name" value="Energy-coupling factor transporter ATP-binding protein EcfA"/>
    <property type="match status" value="1"/>
</dbReference>
<dbReference type="Gene3D" id="3.40.50.300">
    <property type="entry name" value="P-loop containing nucleotide triphosphate hydrolases"/>
    <property type="match status" value="1"/>
</dbReference>
<dbReference type="InterPro" id="IPR003593">
    <property type="entry name" value="AAA+_ATPase"/>
</dbReference>
<dbReference type="InterPro" id="IPR003439">
    <property type="entry name" value="ABC_transporter-like_ATP-bd"/>
</dbReference>
<dbReference type="InterPro" id="IPR017871">
    <property type="entry name" value="ABC_transporter-like_CS"/>
</dbReference>
<dbReference type="InterPro" id="IPR015856">
    <property type="entry name" value="ABC_transpr_CbiO/EcfA_su"/>
</dbReference>
<dbReference type="InterPro" id="IPR050095">
    <property type="entry name" value="ECF_ABC_transporter_ATP-bd"/>
</dbReference>
<dbReference type="InterPro" id="IPR030946">
    <property type="entry name" value="EcfA2"/>
</dbReference>
<dbReference type="InterPro" id="IPR027417">
    <property type="entry name" value="P-loop_NTPase"/>
</dbReference>
<dbReference type="NCBIfam" id="TIGR04521">
    <property type="entry name" value="ECF_ATPase_2"/>
    <property type="match status" value="1"/>
</dbReference>
<dbReference type="NCBIfam" id="NF010153">
    <property type="entry name" value="PRK13631.1"/>
    <property type="match status" value="1"/>
</dbReference>
<dbReference type="PANTHER" id="PTHR43553:SF27">
    <property type="entry name" value="ENERGY-COUPLING FACTOR TRANSPORTER ATP-BINDING PROTEIN ECFA2"/>
    <property type="match status" value="1"/>
</dbReference>
<dbReference type="PANTHER" id="PTHR43553">
    <property type="entry name" value="HEAVY METAL TRANSPORTER"/>
    <property type="match status" value="1"/>
</dbReference>
<dbReference type="Pfam" id="PF00005">
    <property type="entry name" value="ABC_tran"/>
    <property type="match status" value="1"/>
</dbReference>
<dbReference type="SMART" id="SM00382">
    <property type="entry name" value="AAA"/>
    <property type="match status" value="1"/>
</dbReference>
<dbReference type="SUPFAM" id="SSF52540">
    <property type="entry name" value="P-loop containing nucleoside triphosphate hydrolases"/>
    <property type="match status" value="1"/>
</dbReference>
<dbReference type="PROSITE" id="PS00211">
    <property type="entry name" value="ABC_TRANSPORTER_1"/>
    <property type="match status" value="1"/>
</dbReference>
<dbReference type="PROSITE" id="PS50893">
    <property type="entry name" value="ABC_TRANSPORTER_2"/>
    <property type="match status" value="1"/>
</dbReference>
<dbReference type="PROSITE" id="PS51246">
    <property type="entry name" value="CBIO"/>
    <property type="match status" value="1"/>
</dbReference>
<keyword id="KW-0067">ATP-binding</keyword>
<keyword id="KW-1003">Cell membrane</keyword>
<keyword id="KW-0472">Membrane</keyword>
<keyword id="KW-0547">Nucleotide-binding</keyword>
<keyword id="KW-1185">Reference proteome</keyword>
<keyword id="KW-1278">Translocase</keyword>
<keyword id="KW-0813">Transport</keyword>
<gene>
    <name evidence="1" type="primary">ecfA2</name>
    <name type="synonym">cbiO2</name>
    <name type="ordered locus">MPN_194</name>
    <name type="ORF">GT9_orf303</name>
    <name type="ORF">MP637</name>
</gene>
<sequence length="303" mass="34357">MKKIVELKNPLRDGEILSVSNLSCFFNEKTVHEVKVIDNFSYTFAKNKVYCIIGDSGSGKSTLVNHFNGLIKPAYGDIWVKDIYIGQKQRKIKDFKRLRKTISIVFQFPEYQLFKDTVEKDIMFGPIALGQSKNEARQKAAYYLEKMGLKYTFLERNPFELSGGQKRRVAIAGILAIEPEVLIFDEPTAGLDPEGEREMMRLIKDAKASGRTVFMITHQMENVLEVADEVLVLSKGQLVKSGDPYEVFMDEAFLAHTTIIMPPVIQVIKDLINLNPKFSCLLDFKPRNLDQLADAINNTIAHG</sequence>
<proteinExistence type="inferred from homology"/>
<protein>
    <recommendedName>
        <fullName evidence="1">Energy-coupling factor transporter ATP-binding protein EcfA2</fullName>
        <shortName evidence="1">ECF transporter A component EcfA2</shortName>
        <ecNumber evidence="1">7.-.-.-</ecNumber>
    </recommendedName>
</protein>
<organism>
    <name type="scientific">Mycoplasma pneumoniae (strain ATCC 29342 / M129 / Subtype 1)</name>
    <name type="common">Mycoplasmoides pneumoniae</name>
    <dbReference type="NCBI Taxonomy" id="272634"/>
    <lineage>
        <taxon>Bacteria</taxon>
        <taxon>Bacillati</taxon>
        <taxon>Mycoplasmatota</taxon>
        <taxon>Mycoplasmoidales</taxon>
        <taxon>Mycoplasmoidaceae</taxon>
        <taxon>Mycoplasmoides</taxon>
    </lineage>
</organism>
<name>ECFA2_MYCPN</name>
<comment type="function">
    <text evidence="1">ATP-binding (A) component of a common energy-coupling factor (ECF) ABC-transporter complex. Unlike classic ABC transporters this ECF transporter provides the energy necessary to transport a number of different substrates.</text>
</comment>
<comment type="subunit">
    <text evidence="1">Forms a stable energy-coupling factor (ECF) transporter complex composed of 2 membrane-embedded substrate-binding proteins (S component), 2 ATP-binding proteins (A component) and 2 transmembrane proteins (T component).</text>
</comment>
<comment type="subcellular location">
    <subcellularLocation>
        <location evidence="1">Cell membrane</location>
        <topology evidence="1">Peripheral membrane protein</topology>
    </subcellularLocation>
</comment>
<comment type="similarity">
    <text evidence="1">Belongs to the ABC transporter superfamily. Energy-coupling factor EcfA family.</text>
</comment>
<evidence type="ECO:0000255" key="1">
    <source>
        <dbReference type="HAMAP-Rule" id="MF_01710"/>
    </source>
</evidence>
<feature type="chain" id="PRO_0000092046" description="Energy-coupling factor transporter ATP-binding protein EcfA2">
    <location>
        <begin position="1"/>
        <end position="303"/>
    </location>
</feature>
<feature type="domain" description="ABC transporter" evidence="1">
    <location>
        <begin position="17"/>
        <end position="260"/>
    </location>
</feature>
<feature type="binding site" evidence="1">
    <location>
        <begin position="54"/>
        <end position="61"/>
    </location>
    <ligand>
        <name>ATP</name>
        <dbReference type="ChEBI" id="CHEBI:30616"/>
    </ligand>
</feature>